<name>RL6_CLOB1</name>
<organism>
    <name type="scientific">Clostridium botulinum (strain ATCC 19397 / Type A)</name>
    <dbReference type="NCBI Taxonomy" id="441770"/>
    <lineage>
        <taxon>Bacteria</taxon>
        <taxon>Bacillati</taxon>
        <taxon>Bacillota</taxon>
        <taxon>Clostridia</taxon>
        <taxon>Eubacteriales</taxon>
        <taxon>Clostridiaceae</taxon>
        <taxon>Clostridium</taxon>
    </lineage>
</organism>
<accession>A7FZ54</accession>
<reference key="1">
    <citation type="journal article" date="2007" name="PLoS ONE">
        <title>Analysis of the neurotoxin complex genes in Clostridium botulinum A1-A4 and B1 strains: BoNT/A3, /Ba4 and /B1 clusters are located within plasmids.</title>
        <authorList>
            <person name="Smith T.J."/>
            <person name="Hill K.K."/>
            <person name="Foley B.T."/>
            <person name="Detter J.C."/>
            <person name="Munk A.C."/>
            <person name="Bruce D.C."/>
            <person name="Doggett N.A."/>
            <person name="Smith L.A."/>
            <person name="Marks J.D."/>
            <person name="Xie G."/>
            <person name="Brettin T.S."/>
        </authorList>
    </citation>
    <scope>NUCLEOTIDE SEQUENCE [LARGE SCALE GENOMIC DNA]</scope>
    <source>
        <strain>ATCC 19397 / Type A</strain>
    </source>
</reference>
<evidence type="ECO:0000255" key="1">
    <source>
        <dbReference type="HAMAP-Rule" id="MF_01365"/>
    </source>
</evidence>
<evidence type="ECO:0000305" key="2"/>
<sequence>MSRVGKLPVAIPNGVTVTVTPDNVVTVKGPKGELVKAMSNKINIAVEDNSVVVTRDNDHKDVRALHGLTRALVNNMVTGVNEGYVKTLELIGVGYRAQLQGKKLVLSLGFSHPVEMEAVSGVEFEVEGGTKVKVKGIDKELVGAVAADIRKWRKPEPYKGKGIKYENEVIRRKEGKTGKK</sequence>
<dbReference type="EMBL" id="CP000726">
    <property type="protein sequence ID" value="ABS35634.1"/>
    <property type="molecule type" value="Genomic_DNA"/>
</dbReference>
<dbReference type="RefSeq" id="WP_003357306.1">
    <property type="nucleotide sequence ID" value="NC_009697.1"/>
</dbReference>
<dbReference type="SMR" id="A7FZ54"/>
<dbReference type="GeneID" id="5187721"/>
<dbReference type="KEGG" id="cba:CLB_3522"/>
<dbReference type="HOGENOM" id="CLU_065464_1_2_9"/>
<dbReference type="GO" id="GO:0022625">
    <property type="term" value="C:cytosolic large ribosomal subunit"/>
    <property type="evidence" value="ECO:0007669"/>
    <property type="project" value="TreeGrafter"/>
</dbReference>
<dbReference type="GO" id="GO:0019843">
    <property type="term" value="F:rRNA binding"/>
    <property type="evidence" value="ECO:0007669"/>
    <property type="project" value="UniProtKB-UniRule"/>
</dbReference>
<dbReference type="GO" id="GO:0003735">
    <property type="term" value="F:structural constituent of ribosome"/>
    <property type="evidence" value="ECO:0007669"/>
    <property type="project" value="InterPro"/>
</dbReference>
<dbReference type="GO" id="GO:0002181">
    <property type="term" value="P:cytoplasmic translation"/>
    <property type="evidence" value="ECO:0007669"/>
    <property type="project" value="TreeGrafter"/>
</dbReference>
<dbReference type="FunFam" id="3.90.930.12:FF:000001">
    <property type="entry name" value="50S ribosomal protein L6"/>
    <property type="match status" value="1"/>
</dbReference>
<dbReference type="FunFam" id="3.90.930.12:FF:000002">
    <property type="entry name" value="50S ribosomal protein L6"/>
    <property type="match status" value="1"/>
</dbReference>
<dbReference type="Gene3D" id="3.90.930.12">
    <property type="entry name" value="Ribosomal protein L6, alpha-beta domain"/>
    <property type="match status" value="2"/>
</dbReference>
<dbReference type="HAMAP" id="MF_01365_B">
    <property type="entry name" value="Ribosomal_uL6_B"/>
    <property type="match status" value="1"/>
</dbReference>
<dbReference type="InterPro" id="IPR000702">
    <property type="entry name" value="Ribosomal_uL6-like"/>
</dbReference>
<dbReference type="InterPro" id="IPR036789">
    <property type="entry name" value="Ribosomal_uL6-like_a/b-dom_sf"/>
</dbReference>
<dbReference type="InterPro" id="IPR020040">
    <property type="entry name" value="Ribosomal_uL6_a/b-dom"/>
</dbReference>
<dbReference type="InterPro" id="IPR019906">
    <property type="entry name" value="Ribosomal_uL6_bac-type"/>
</dbReference>
<dbReference type="InterPro" id="IPR002358">
    <property type="entry name" value="Ribosomal_uL6_CS"/>
</dbReference>
<dbReference type="NCBIfam" id="TIGR03654">
    <property type="entry name" value="L6_bact"/>
    <property type="match status" value="1"/>
</dbReference>
<dbReference type="PANTHER" id="PTHR11655">
    <property type="entry name" value="60S/50S RIBOSOMAL PROTEIN L6/L9"/>
    <property type="match status" value="1"/>
</dbReference>
<dbReference type="PANTHER" id="PTHR11655:SF14">
    <property type="entry name" value="LARGE RIBOSOMAL SUBUNIT PROTEIN UL6M"/>
    <property type="match status" value="1"/>
</dbReference>
<dbReference type="Pfam" id="PF00347">
    <property type="entry name" value="Ribosomal_L6"/>
    <property type="match status" value="2"/>
</dbReference>
<dbReference type="PIRSF" id="PIRSF002162">
    <property type="entry name" value="Ribosomal_L6"/>
    <property type="match status" value="1"/>
</dbReference>
<dbReference type="PRINTS" id="PR00059">
    <property type="entry name" value="RIBOSOMALL6"/>
</dbReference>
<dbReference type="SUPFAM" id="SSF56053">
    <property type="entry name" value="Ribosomal protein L6"/>
    <property type="match status" value="2"/>
</dbReference>
<dbReference type="PROSITE" id="PS00525">
    <property type="entry name" value="RIBOSOMAL_L6_1"/>
    <property type="match status" value="1"/>
</dbReference>
<feature type="chain" id="PRO_1000055220" description="Large ribosomal subunit protein uL6">
    <location>
        <begin position="1"/>
        <end position="180"/>
    </location>
</feature>
<comment type="function">
    <text evidence="1">This protein binds to the 23S rRNA, and is important in its secondary structure. It is located near the subunit interface in the base of the L7/L12 stalk, and near the tRNA binding site of the peptidyltransferase center.</text>
</comment>
<comment type="subunit">
    <text evidence="1">Part of the 50S ribosomal subunit.</text>
</comment>
<comment type="similarity">
    <text evidence="1">Belongs to the universal ribosomal protein uL6 family.</text>
</comment>
<keyword id="KW-0687">Ribonucleoprotein</keyword>
<keyword id="KW-0689">Ribosomal protein</keyword>
<keyword id="KW-0694">RNA-binding</keyword>
<keyword id="KW-0699">rRNA-binding</keyword>
<protein>
    <recommendedName>
        <fullName evidence="1">Large ribosomal subunit protein uL6</fullName>
    </recommendedName>
    <alternativeName>
        <fullName evidence="2">50S ribosomal protein L6</fullName>
    </alternativeName>
</protein>
<proteinExistence type="inferred from homology"/>
<gene>
    <name evidence="1" type="primary">rplF</name>
    <name type="ordered locus">CLB_3522</name>
</gene>